<name>PPID_ECOL6</name>
<gene>
    <name type="primary">ppiD</name>
    <name type="ordered locus">c0557</name>
</gene>
<comment type="function">
    <text evidence="1">Chaperone that functions as a gatekeeper on the periplasmic side of the SecYEG translocon. Facilitates the translocation of precursor proteins across SecYEG by interacting with the translocating substrate. Also plays a role in the release of newly synthesized secreted proteins at the periplasmic exit site of the Sec translocon.</text>
</comment>
<comment type="subunit">
    <text evidence="1">Interacts with the SecYEG translocon (By similarity). Binds to the lateral gate of SecY (By similarity). Forms a complex with YfgM (By similarity).</text>
</comment>
<comment type="subcellular location">
    <subcellularLocation>
        <location evidence="1">Cell inner membrane</location>
        <topology evidence="1">Single-pass type II membrane protein</topology>
        <orientation evidence="1">Periplasmic side</orientation>
    </subcellularLocation>
    <text evidence="1">Located at the lateral gate of SecY.</text>
</comment>
<comment type="similarity">
    <text evidence="4">Belongs to the PpiD chaperone family.</text>
</comment>
<proteinExistence type="inferred from homology"/>
<accession>P0ADY2</accession>
<accession>P77241</accession>
<protein>
    <recommendedName>
        <fullName evidence="1">Periplasmic chaperone PpiD</fullName>
    </recommendedName>
    <alternativeName>
        <fullName evidence="1">Periplasmic folding chaperone</fullName>
    </alternativeName>
</protein>
<dbReference type="EMBL" id="AE014075">
    <property type="protein sequence ID" value="AAN79035.1"/>
    <property type="molecule type" value="Genomic_DNA"/>
</dbReference>
<dbReference type="RefSeq" id="WP_000969372.1">
    <property type="nucleotide sequence ID" value="NZ_CP051263.1"/>
</dbReference>
<dbReference type="BMRB" id="P0ADY2"/>
<dbReference type="SMR" id="P0ADY2"/>
<dbReference type="STRING" id="199310.c0557"/>
<dbReference type="GeneID" id="93777013"/>
<dbReference type="KEGG" id="ecc:c0557"/>
<dbReference type="eggNOG" id="COG0760">
    <property type="taxonomic scope" value="Bacteria"/>
</dbReference>
<dbReference type="HOGENOM" id="CLU_023843_1_1_6"/>
<dbReference type="BioCyc" id="ECOL199310:C0557-MONOMER"/>
<dbReference type="Proteomes" id="UP000001410">
    <property type="component" value="Chromosome"/>
</dbReference>
<dbReference type="GO" id="GO:0005886">
    <property type="term" value="C:plasma membrane"/>
    <property type="evidence" value="ECO:0007669"/>
    <property type="project" value="UniProtKB-SubCell"/>
</dbReference>
<dbReference type="GO" id="GO:0003755">
    <property type="term" value="F:peptidyl-prolyl cis-trans isomerase activity"/>
    <property type="evidence" value="ECO:0007669"/>
    <property type="project" value="InterPro"/>
</dbReference>
<dbReference type="FunFam" id="1.10.4030.10:FF:000003">
    <property type="entry name" value="Peptidylprolyl isomerase"/>
    <property type="match status" value="1"/>
</dbReference>
<dbReference type="FunFam" id="3.10.50.40:FF:000021">
    <property type="entry name" value="Peptidylprolyl isomerase"/>
    <property type="match status" value="1"/>
</dbReference>
<dbReference type="Gene3D" id="3.10.50.40">
    <property type="match status" value="1"/>
</dbReference>
<dbReference type="Gene3D" id="1.10.4030.10">
    <property type="entry name" value="Porin chaperone SurA, peptide-binding domain"/>
    <property type="match status" value="1"/>
</dbReference>
<dbReference type="InterPro" id="IPR046357">
    <property type="entry name" value="PPIase_dom_sf"/>
</dbReference>
<dbReference type="InterPro" id="IPR000297">
    <property type="entry name" value="PPIase_PpiC"/>
</dbReference>
<dbReference type="InterPro" id="IPR023058">
    <property type="entry name" value="PPIase_PpiC_CS"/>
</dbReference>
<dbReference type="InterPro" id="IPR052029">
    <property type="entry name" value="PpiD_chaperone"/>
</dbReference>
<dbReference type="InterPro" id="IPR027304">
    <property type="entry name" value="Trigger_fact/SurA_dom_sf"/>
</dbReference>
<dbReference type="NCBIfam" id="NF008054">
    <property type="entry name" value="PRK10788.1"/>
    <property type="match status" value="1"/>
</dbReference>
<dbReference type="PANTHER" id="PTHR47529">
    <property type="entry name" value="PEPTIDYL-PROLYL CIS-TRANS ISOMERASE D"/>
    <property type="match status" value="1"/>
</dbReference>
<dbReference type="PANTHER" id="PTHR47529:SF1">
    <property type="entry name" value="PERIPLASMIC CHAPERONE PPID"/>
    <property type="match status" value="1"/>
</dbReference>
<dbReference type="Pfam" id="PF13145">
    <property type="entry name" value="Rotamase_2"/>
    <property type="match status" value="1"/>
</dbReference>
<dbReference type="Pfam" id="PF13624">
    <property type="entry name" value="SurA_N_3"/>
    <property type="match status" value="1"/>
</dbReference>
<dbReference type="SUPFAM" id="SSF54534">
    <property type="entry name" value="FKBP-like"/>
    <property type="match status" value="1"/>
</dbReference>
<dbReference type="SUPFAM" id="SSF109998">
    <property type="entry name" value="Triger factor/SurA peptide-binding domain-like"/>
    <property type="match status" value="1"/>
</dbReference>
<dbReference type="PROSITE" id="PS01096">
    <property type="entry name" value="PPIC_PPIASE_1"/>
    <property type="match status" value="1"/>
</dbReference>
<dbReference type="PROSITE" id="PS50198">
    <property type="entry name" value="PPIC_PPIASE_2"/>
    <property type="match status" value="1"/>
</dbReference>
<reference key="1">
    <citation type="journal article" date="2002" name="Proc. Natl. Acad. Sci. U.S.A.">
        <title>Extensive mosaic structure revealed by the complete genome sequence of uropathogenic Escherichia coli.</title>
        <authorList>
            <person name="Welch R.A."/>
            <person name="Burland V."/>
            <person name="Plunkett G. III"/>
            <person name="Redford P."/>
            <person name="Roesch P."/>
            <person name="Rasko D."/>
            <person name="Buckles E.L."/>
            <person name="Liou S.-R."/>
            <person name="Boutin A."/>
            <person name="Hackett J."/>
            <person name="Stroud D."/>
            <person name="Mayhew G.F."/>
            <person name="Rose D.J."/>
            <person name="Zhou S."/>
            <person name="Schwartz D.C."/>
            <person name="Perna N.T."/>
            <person name="Mobley H.L.T."/>
            <person name="Donnenberg M.S."/>
            <person name="Blattner F.R."/>
        </authorList>
    </citation>
    <scope>NUCLEOTIDE SEQUENCE [LARGE SCALE GENOMIC DNA]</scope>
    <source>
        <strain>CFT073 / ATCC 700928 / UPEC</strain>
    </source>
</reference>
<keyword id="KW-0997">Cell inner membrane</keyword>
<keyword id="KW-1003">Cell membrane</keyword>
<keyword id="KW-0143">Chaperone</keyword>
<keyword id="KW-0472">Membrane</keyword>
<keyword id="KW-1185">Reference proteome</keyword>
<keyword id="KW-0812">Transmembrane</keyword>
<keyword id="KW-1133">Transmembrane helix</keyword>
<evidence type="ECO:0000250" key="1">
    <source>
        <dbReference type="UniProtKB" id="P0ADY1"/>
    </source>
</evidence>
<evidence type="ECO:0000255" key="2"/>
<evidence type="ECO:0000255" key="3">
    <source>
        <dbReference type="PROSITE-ProRule" id="PRU00278"/>
    </source>
</evidence>
<evidence type="ECO:0000305" key="4"/>
<sequence>MMDSLRTAANSLVLKIIFGIIIVSFILTGVSGYLIGGGNNYAAKVNDQEISRGQFENAFNSERNRMQQQLGDQYSELAANEGYMKTLRQQVLNRLIDEALLDQYARELKLGISDEQVKQAIFATPAFQVDGKFDNSRYNGILNQMGMTADQYAQALRNQLTTQQLINGVAGTDFMLKGETDELAALVAQQRVVREATIDVNALAAKQPVTEQEIASYYEQNKNNFMTPEQFRVSYIKLDAATMQQPVSDADIQSYYDQHQDQFTQPQRTRYSIIQTKTEDEAKAVLDELNKGGDFAALAKEKSADIISARNGGDMGWLEDATIPDELKNAGLKEKGQLSGVIKSSVGFLIVRLDDIQPAKVKSLDEVRDDIAAKVKHEKALDAYYALQQKVSDAASNDTESLAGAEQAAGVKATQTGWFSKDNLPEELNFKPVADAIFNGGLVGENGAPGINSDIITVDGDRAFVLRISEHKPEAVKPLADVQEQVKALVQHNKAEQQAKVDAEKLLVDLKAGKGAEAMQAAGLKFGEPKTLSRSGRDPISQAAFALPLPAKDKPSYGMATDMQGNVVLLALDEVKQGSMPEDQKKAMVQGITQNNAQIVFEALMSNLRKEAKIKIGDALEQQ</sequence>
<feature type="chain" id="PRO_0000193424" description="Periplasmic chaperone PpiD">
    <location>
        <begin position="1"/>
        <end position="623"/>
    </location>
</feature>
<feature type="topological domain" description="Cytoplasmic" evidence="1">
    <location>
        <begin position="1"/>
        <end position="15"/>
    </location>
</feature>
<feature type="transmembrane region" description="Helical" evidence="2">
    <location>
        <begin position="16"/>
        <end position="36"/>
    </location>
</feature>
<feature type="topological domain" description="Periplasmic" evidence="1">
    <location>
        <begin position="37"/>
        <end position="623"/>
    </location>
</feature>
<feature type="domain" description="PpiC" evidence="3">
    <location>
        <begin position="266"/>
        <end position="355"/>
    </location>
</feature>
<organism>
    <name type="scientific">Escherichia coli O6:H1 (strain CFT073 / ATCC 700928 / UPEC)</name>
    <dbReference type="NCBI Taxonomy" id="199310"/>
    <lineage>
        <taxon>Bacteria</taxon>
        <taxon>Pseudomonadati</taxon>
        <taxon>Pseudomonadota</taxon>
        <taxon>Gammaproteobacteria</taxon>
        <taxon>Enterobacterales</taxon>
        <taxon>Enterobacteriaceae</taxon>
        <taxon>Escherichia</taxon>
    </lineage>
</organism>